<feature type="transit peptide" description="Chloroplast" evidence="1">
    <location>
        <begin position="1"/>
        <end position="95"/>
    </location>
</feature>
<feature type="chain" id="PRO_0000249231" description="Large ribosomal subunit protein bL17c">
    <location>
        <begin position="96"/>
        <end position="211"/>
    </location>
</feature>
<organism>
    <name type="scientific">Arabidopsis thaliana</name>
    <name type="common">Mouse-ear cress</name>
    <dbReference type="NCBI Taxonomy" id="3702"/>
    <lineage>
        <taxon>Eukaryota</taxon>
        <taxon>Viridiplantae</taxon>
        <taxon>Streptophyta</taxon>
        <taxon>Embryophyta</taxon>
        <taxon>Tracheophyta</taxon>
        <taxon>Spermatophyta</taxon>
        <taxon>Magnoliopsida</taxon>
        <taxon>eudicotyledons</taxon>
        <taxon>Gunneridae</taxon>
        <taxon>Pentapetalae</taxon>
        <taxon>rosids</taxon>
        <taxon>malvids</taxon>
        <taxon>Brassicales</taxon>
        <taxon>Brassicaceae</taxon>
        <taxon>Camelineae</taxon>
        <taxon>Arabidopsis</taxon>
    </lineage>
</organism>
<name>RK17_ARATH</name>
<evidence type="ECO:0000250" key="1"/>
<evidence type="ECO:0000303" key="2">
    <source>
    </source>
</evidence>
<evidence type="ECO:0000305" key="3"/>
<keyword id="KW-0150">Chloroplast</keyword>
<keyword id="KW-0934">Plastid</keyword>
<keyword id="KW-1185">Reference proteome</keyword>
<keyword id="KW-0687">Ribonucleoprotein</keyword>
<keyword id="KW-0689">Ribosomal protein</keyword>
<keyword id="KW-0694">RNA-binding</keyword>
<keyword id="KW-0699">rRNA-binding</keyword>
<keyword id="KW-0809">Transit peptide</keyword>
<dbReference type="EMBL" id="AL132957">
    <property type="protein sequence ID" value="CAB70995.1"/>
    <property type="molecule type" value="Genomic_DNA"/>
</dbReference>
<dbReference type="EMBL" id="CP002686">
    <property type="protein sequence ID" value="AEE79199.1"/>
    <property type="molecule type" value="Genomic_DNA"/>
</dbReference>
<dbReference type="EMBL" id="BT000413">
    <property type="protein sequence ID" value="AAN15732.1"/>
    <property type="molecule type" value="mRNA"/>
</dbReference>
<dbReference type="EMBL" id="AY136290">
    <property type="protein sequence ID" value="AAM96956.1"/>
    <property type="molecule type" value="mRNA"/>
</dbReference>
<dbReference type="EMBL" id="AY124804">
    <property type="protein sequence ID" value="AAM70513.1"/>
    <property type="molecule type" value="mRNA"/>
</dbReference>
<dbReference type="EMBL" id="AF375425">
    <property type="protein sequence ID" value="AAK53009.1"/>
    <property type="molecule type" value="mRNA"/>
</dbReference>
<dbReference type="EMBL" id="AY086449">
    <property type="protein sequence ID" value="AAM63452.1"/>
    <property type="status" value="ALT_INIT"/>
    <property type="molecule type" value="mRNA"/>
</dbReference>
<dbReference type="PIR" id="T47580">
    <property type="entry name" value="T47580"/>
</dbReference>
<dbReference type="RefSeq" id="NP_190989.1">
    <property type="nucleotide sequence ID" value="NM_115281.4"/>
</dbReference>
<dbReference type="SMR" id="Q9M385"/>
<dbReference type="BioGRID" id="9905">
    <property type="interactions" value="20"/>
</dbReference>
<dbReference type="FunCoup" id="Q9M385">
    <property type="interactions" value="2709"/>
</dbReference>
<dbReference type="IntAct" id="Q9M385">
    <property type="interactions" value="1"/>
</dbReference>
<dbReference type="STRING" id="3702.Q9M385"/>
<dbReference type="PaxDb" id="3702-AT3G54210.1"/>
<dbReference type="ProteomicsDB" id="237007"/>
<dbReference type="EnsemblPlants" id="AT3G54210.1">
    <property type="protein sequence ID" value="AT3G54210.1"/>
    <property type="gene ID" value="AT3G54210"/>
</dbReference>
<dbReference type="GeneID" id="824588"/>
<dbReference type="Gramene" id="AT3G54210.1">
    <property type="protein sequence ID" value="AT3G54210.1"/>
    <property type="gene ID" value="AT3G54210"/>
</dbReference>
<dbReference type="KEGG" id="ath:AT3G54210"/>
<dbReference type="Araport" id="AT3G54210"/>
<dbReference type="TAIR" id="AT3G54210">
    <property type="gene designation" value="PRPL17"/>
</dbReference>
<dbReference type="eggNOG" id="KOG3280">
    <property type="taxonomic scope" value="Eukaryota"/>
</dbReference>
<dbReference type="HOGENOM" id="CLU_1247182_0_0_1"/>
<dbReference type="InParanoid" id="Q9M385"/>
<dbReference type="OMA" id="WQSFENG"/>
<dbReference type="OrthoDB" id="275000at2759"/>
<dbReference type="PhylomeDB" id="Q9M385"/>
<dbReference type="PRO" id="PR:Q9M385"/>
<dbReference type="Proteomes" id="UP000006548">
    <property type="component" value="Chromosome 3"/>
</dbReference>
<dbReference type="ExpressionAtlas" id="Q9M385">
    <property type="expression patterns" value="baseline and differential"/>
</dbReference>
<dbReference type="GO" id="GO:0009507">
    <property type="term" value="C:chloroplast"/>
    <property type="evidence" value="ECO:0007005"/>
    <property type="project" value="TAIR"/>
</dbReference>
<dbReference type="GO" id="GO:0009941">
    <property type="term" value="C:chloroplast envelope"/>
    <property type="evidence" value="ECO:0007005"/>
    <property type="project" value="TAIR"/>
</dbReference>
<dbReference type="GO" id="GO:0009570">
    <property type="term" value="C:chloroplast stroma"/>
    <property type="evidence" value="ECO:0007005"/>
    <property type="project" value="TAIR"/>
</dbReference>
<dbReference type="GO" id="GO:0005829">
    <property type="term" value="C:cytosol"/>
    <property type="evidence" value="ECO:0007005"/>
    <property type="project" value="TAIR"/>
</dbReference>
<dbReference type="GO" id="GO:1990904">
    <property type="term" value="C:ribonucleoprotein complex"/>
    <property type="evidence" value="ECO:0007669"/>
    <property type="project" value="UniProtKB-KW"/>
</dbReference>
<dbReference type="GO" id="GO:0005840">
    <property type="term" value="C:ribosome"/>
    <property type="evidence" value="ECO:0007669"/>
    <property type="project" value="UniProtKB-KW"/>
</dbReference>
<dbReference type="GO" id="GO:0019843">
    <property type="term" value="F:rRNA binding"/>
    <property type="evidence" value="ECO:0007669"/>
    <property type="project" value="UniProtKB-KW"/>
</dbReference>
<dbReference type="GO" id="GO:0003735">
    <property type="term" value="F:structural constituent of ribosome"/>
    <property type="evidence" value="ECO:0007669"/>
    <property type="project" value="InterPro"/>
</dbReference>
<dbReference type="GO" id="GO:0006412">
    <property type="term" value="P:translation"/>
    <property type="evidence" value="ECO:0007669"/>
    <property type="project" value="InterPro"/>
</dbReference>
<dbReference type="FunFam" id="3.90.1030.10:FF:000001">
    <property type="entry name" value="50S ribosomal protein L17"/>
    <property type="match status" value="1"/>
</dbReference>
<dbReference type="Gene3D" id="3.90.1030.10">
    <property type="entry name" value="Ribosomal protein L17"/>
    <property type="match status" value="1"/>
</dbReference>
<dbReference type="HAMAP" id="MF_01368">
    <property type="entry name" value="Ribosomal_bL17"/>
    <property type="match status" value="1"/>
</dbReference>
<dbReference type="InterPro" id="IPR000456">
    <property type="entry name" value="Ribosomal_bL17"/>
</dbReference>
<dbReference type="InterPro" id="IPR036373">
    <property type="entry name" value="Ribosomal_bL17_sf"/>
</dbReference>
<dbReference type="NCBIfam" id="TIGR00059">
    <property type="entry name" value="L17"/>
    <property type="match status" value="1"/>
</dbReference>
<dbReference type="PANTHER" id="PTHR14413:SF16">
    <property type="entry name" value="LARGE RIBOSOMAL SUBUNIT PROTEIN BL17M"/>
    <property type="match status" value="1"/>
</dbReference>
<dbReference type="PANTHER" id="PTHR14413">
    <property type="entry name" value="RIBOSOMAL PROTEIN L17"/>
    <property type="match status" value="1"/>
</dbReference>
<dbReference type="Pfam" id="PF01196">
    <property type="entry name" value="Ribosomal_L17"/>
    <property type="match status" value="1"/>
</dbReference>
<dbReference type="SUPFAM" id="SSF64263">
    <property type="entry name" value="Prokaryotic ribosomal protein L17"/>
    <property type="match status" value="1"/>
</dbReference>
<accession>Q9M385</accession>
<accession>Q8LCR3</accession>
<proteinExistence type="evidence at transcript level"/>
<sequence>MAIPMSMAMATPTDSVSRVWSMSSLKSALPSTASLRLPSSSSRRPVTLRLPISSPSLPSFSGLSPVNPLLSIGLPDWQSFENGFKIVDGGGRIYAMRHGRRVPKLNRPPDQRKALLRGLTTQLLKHGRIKTTRARASAMRKFVDKMITLAKDGSLHKRRQALGYIYEKQIVHALFAEVPDRYGERNGGYTRIIRTLPRRGDNAPMAYIELV</sequence>
<gene>
    <name type="primary">RPL17</name>
    <name type="ordered locus">At3g54210</name>
    <name type="ORF">F24B22.170</name>
</gene>
<reference key="1">
    <citation type="journal article" date="2000" name="Nature">
        <title>Sequence and analysis of chromosome 3 of the plant Arabidopsis thaliana.</title>
        <authorList>
            <person name="Salanoubat M."/>
            <person name="Lemcke K."/>
            <person name="Rieger M."/>
            <person name="Ansorge W."/>
            <person name="Unseld M."/>
            <person name="Fartmann B."/>
            <person name="Valle G."/>
            <person name="Bloecker H."/>
            <person name="Perez-Alonso M."/>
            <person name="Obermaier B."/>
            <person name="Delseny M."/>
            <person name="Boutry M."/>
            <person name="Grivell L.A."/>
            <person name="Mache R."/>
            <person name="Puigdomenech P."/>
            <person name="De Simone V."/>
            <person name="Choisne N."/>
            <person name="Artiguenave F."/>
            <person name="Robert C."/>
            <person name="Brottier P."/>
            <person name="Wincker P."/>
            <person name="Cattolico L."/>
            <person name="Weissenbach J."/>
            <person name="Saurin W."/>
            <person name="Quetier F."/>
            <person name="Schaefer M."/>
            <person name="Mueller-Auer S."/>
            <person name="Gabel C."/>
            <person name="Fuchs M."/>
            <person name="Benes V."/>
            <person name="Wurmbach E."/>
            <person name="Drzonek H."/>
            <person name="Erfle H."/>
            <person name="Jordan N."/>
            <person name="Bangert S."/>
            <person name="Wiedelmann R."/>
            <person name="Kranz H."/>
            <person name="Voss H."/>
            <person name="Holland R."/>
            <person name="Brandt P."/>
            <person name="Nyakatura G."/>
            <person name="Vezzi A."/>
            <person name="D'Angelo M."/>
            <person name="Pallavicini A."/>
            <person name="Toppo S."/>
            <person name="Simionati B."/>
            <person name="Conrad A."/>
            <person name="Hornischer K."/>
            <person name="Kauer G."/>
            <person name="Loehnert T.-H."/>
            <person name="Nordsiek G."/>
            <person name="Reichelt J."/>
            <person name="Scharfe M."/>
            <person name="Schoen O."/>
            <person name="Bargues M."/>
            <person name="Terol J."/>
            <person name="Climent J."/>
            <person name="Navarro P."/>
            <person name="Collado C."/>
            <person name="Perez-Perez A."/>
            <person name="Ottenwaelder B."/>
            <person name="Duchemin D."/>
            <person name="Cooke R."/>
            <person name="Laudie M."/>
            <person name="Berger-Llauro C."/>
            <person name="Purnelle B."/>
            <person name="Masuy D."/>
            <person name="de Haan M."/>
            <person name="Maarse A.C."/>
            <person name="Alcaraz J.-P."/>
            <person name="Cottet A."/>
            <person name="Casacuberta E."/>
            <person name="Monfort A."/>
            <person name="Argiriou A."/>
            <person name="Flores M."/>
            <person name="Liguori R."/>
            <person name="Vitale D."/>
            <person name="Mannhaupt G."/>
            <person name="Haase D."/>
            <person name="Schoof H."/>
            <person name="Rudd S."/>
            <person name="Zaccaria P."/>
            <person name="Mewes H.-W."/>
            <person name="Mayer K.F.X."/>
            <person name="Kaul S."/>
            <person name="Town C.D."/>
            <person name="Koo H.L."/>
            <person name="Tallon L.J."/>
            <person name="Jenkins J."/>
            <person name="Rooney T."/>
            <person name="Rizzo M."/>
            <person name="Walts A."/>
            <person name="Utterback T."/>
            <person name="Fujii C.Y."/>
            <person name="Shea T.P."/>
            <person name="Creasy T.H."/>
            <person name="Haas B."/>
            <person name="Maiti R."/>
            <person name="Wu D."/>
            <person name="Peterson J."/>
            <person name="Van Aken S."/>
            <person name="Pai G."/>
            <person name="Militscher J."/>
            <person name="Sellers P."/>
            <person name="Gill J.E."/>
            <person name="Feldblyum T.V."/>
            <person name="Preuss D."/>
            <person name="Lin X."/>
            <person name="Nierman W.C."/>
            <person name="Salzberg S.L."/>
            <person name="White O."/>
            <person name="Venter J.C."/>
            <person name="Fraser C.M."/>
            <person name="Kaneko T."/>
            <person name="Nakamura Y."/>
            <person name="Sato S."/>
            <person name="Kato T."/>
            <person name="Asamizu E."/>
            <person name="Sasamoto S."/>
            <person name="Kimura T."/>
            <person name="Idesawa K."/>
            <person name="Kawashima K."/>
            <person name="Kishida Y."/>
            <person name="Kiyokawa C."/>
            <person name="Kohara M."/>
            <person name="Matsumoto M."/>
            <person name="Matsuno A."/>
            <person name="Muraki A."/>
            <person name="Nakayama S."/>
            <person name="Nakazaki N."/>
            <person name="Shinpo S."/>
            <person name="Takeuchi C."/>
            <person name="Wada T."/>
            <person name="Watanabe A."/>
            <person name="Yamada M."/>
            <person name="Yasuda M."/>
            <person name="Tabata S."/>
        </authorList>
    </citation>
    <scope>NUCLEOTIDE SEQUENCE [LARGE SCALE GENOMIC DNA]</scope>
    <source>
        <strain>cv. Columbia</strain>
    </source>
</reference>
<reference key="2">
    <citation type="journal article" date="2017" name="Plant J.">
        <title>Araport11: a complete reannotation of the Arabidopsis thaliana reference genome.</title>
        <authorList>
            <person name="Cheng C.Y."/>
            <person name="Krishnakumar V."/>
            <person name="Chan A.P."/>
            <person name="Thibaud-Nissen F."/>
            <person name="Schobel S."/>
            <person name="Town C.D."/>
        </authorList>
    </citation>
    <scope>GENOME REANNOTATION</scope>
    <source>
        <strain>cv. Columbia</strain>
    </source>
</reference>
<reference key="3">
    <citation type="journal article" date="2003" name="Science">
        <title>Empirical analysis of transcriptional activity in the Arabidopsis genome.</title>
        <authorList>
            <person name="Yamada K."/>
            <person name="Lim J."/>
            <person name="Dale J.M."/>
            <person name="Chen H."/>
            <person name="Shinn P."/>
            <person name="Palm C.J."/>
            <person name="Southwick A.M."/>
            <person name="Wu H.C."/>
            <person name="Kim C.J."/>
            <person name="Nguyen M."/>
            <person name="Pham P.K."/>
            <person name="Cheuk R.F."/>
            <person name="Karlin-Newmann G."/>
            <person name="Liu S.X."/>
            <person name="Lam B."/>
            <person name="Sakano H."/>
            <person name="Wu T."/>
            <person name="Yu G."/>
            <person name="Miranda M."/>
            <person name="Quach H.L."/>
            <person name="Tripp M."/>
            <person name="Chang C.H."/>
            <person name="Lee J.M."/>
            <person name="Toriumi M.J."/>
            <person name="Chan M.M."/>
            <person name="Tang C.C."/>
            <person name="Onodera C.S."/>
            <person name="Deng J.M."/>
            <person name="Akiyama K."/>
            <person name="Ansari Y."/>
            <person name="Arakawa T."/>
            <person name="Banh J."/>
            <person name="Banno F."/>
            <person name="Bowser L."/>
            <person name="Brooks S.Y."/>
            <person name="Carninci P."/>
            <person name="Chao Q."/>
            <person name="Choy N."/>
            <person name="Enju A."/>
            <person name="Goldsmith A.D."/>
            <person name="Gurjal M."/>
            <person name="Hansen N.F."/>
            <person name="Hayashizaki Y."/>
            <person name="Johnson-Hopson C."/>
            <person name="Hsuan V.W."/>
            <person name="Iida K."/>
            <person name="Karnes M."/>
            <person name="Khan S."/>
            <person name="Koesema E."/>
            <person name="Ishida J."/>
            <person name="Jiang P.X."/>
            <person name="Jones T."/>
            <person name="Kawai J."/>
            <person name="Kamiya A."/>
            <person name="Meyers C."/>
            <person name="Nakajima M."/>
            <person name="Narusaka M."/>
            <person name="Seki M."/>
            <person name="Sakurai T."/>
            <person name="Satou M."/>
            <person name="Tamse R."/>
            <person name="Vaysberg M."/>
            <person name="Wallender E.K."/>
            <person name="Wong C."/>
            <person name="Yamamura Y."/>
            <person name="Yuan S."/>
            <person name="Shinozaki K."/>
            <person name="Davis R.W."/>
            <person name="Theologis A."/>
            <person name="Ecker J.R."/>
        </authorList>
    </citation>
    <scope>NUCLEOTIDE SEQUENCE [LARGE SCALE MRNA]</scope>
    <source>
        <strain>cv. Columbia</strain>
    </source>
</reference>
<reference key="4">
    <citation type="submission" date="2002-03" db="EMBL/GenBank/DDBJ databases">
        <title>Full-length cDNA from Arabidopsis thaliana.</title>
        <authorList>
            <person name="Brover V.V."/>
            <person name="Troukhan M.E."/>
            <person name="Alexandrov N.A."/>
            <person name="Lu Y.-P."/>
            <person name="Flavell R.B."/>
            <person name="Feldmann K.A."/>
        </authorList>
    </citation>
    <scope>NUCLEOTIDE SEQUENCE [LARGE SCALE MRNA]</scope>
</reference>
<reference key="5">
    <citation type="journal article" date="2023" name="Plant Cell">
        <title>An updated nomenclature for plant ribosomal protein genes.</title>
        <authorList>
            <person name="Scarpin M.R."/>
            <person name="Busche M."/>
            <person name="Martinez R.E."/>
            <person name="Harper L.C."/>
            <person name="Reiser L."/>
            <person name="Szakonyi D."/>
            <person name="Merchante C."/>
            <person name="Lan T."/>
            <person name="Xiong W."/>
            <person name="Mo B."/>
            <person name="Tang G."/>
            <person name="Chen X."/>
            <person name="Bailey-Serres J."/>
            <person name="Browning K.S."/>
            <person name="Brunkard J.O."/>
        </authorList>
    </citation>
    <scope>NOMENCLATURE</scope>
</reference>
<protein>
    <recommendedName>
        <fullName evidence="2">Large ribosomal subunit protein bL17c</fullName>
    </recommendedName>
    <alternativeName>
        <fullName>50S ribosomal protein L17, chloroplastic</fullName>
    </alternativeName>
    <alternativeName>
        <fullName>CL17</fullName>
    </alternativeName>
</protein>
<comment type="function">
    <text evidence="1">This protein binds directly to 23S ribosomal RNA.</text>
</comment>
<comment type="subunit">
    <text evidence="1">Part of the 50S ribosomal subunit.</text>
</comment>
<comment type="subcellular location">
    <subcellularLocation>
        <location>Plastid</location>
        <location>Chloroplast</location>
    </subcellularLocation>
</comment>
<comment type="similarity">
    <text evidence="3">Belongs to the bacterial ribosomal protein bL17 family.</text>
</comment>
<comment type="sequence caution" evidence="3">
    <conflict type="erroneous initiation">
        <sequence resource="EMBL-CDS" id="AAM63452"/>
    </conflict>
</comment>